<comment type="function">
    <text>May contribute to the structure of the coat at the interface between the middle, cellulosic layer and the outer, electron-dense, proteinaceous layer.</text>
</comment>
<comment type="subcellular location">
    <subcellularLocation>
        <location>Cytoplasmic vesicle</location>
        <location>Secretory vesicle</location>
    </subcellularLocation>
    <subcellularLocation>
        <location>Spore coat</location>
    </subcellularLocation>
    <text>Accumulates specifically in regulated secretory vesicles of prespore cells (prespore vesicles). The protein later accumulates extracellularly in the spore coat.</text>
</comment>
<comment type="induction">
    <text>By cAMP.</text>
</comment>
<comment type="PTM">
    <text>Disulfide bonding is important for associating SP87 with the coat.</text>
</comment>
<comment type="PTM">
    <text>Phosphorylated on serine residues.</text>
</comment>
<evidence type="ECO:0000255" key="1"/>
<evidence type="ECO:0000256" key="2">
    <source>
        <dbReference type="SAM" id="MobiDB-lite"/>
    </source>
</evidence>
<name>SP87_DICDI</name>
<dbReference type="EMBL" id="U25144">
    <property type="protein sequence ID" value="AAA73515.1"/>
    <property type="molecule type" value="Genomic_DNA"/>
</dbReference>
<dbReference type="EMBL" id="AAFI02000019">
    <property type="protein sequence ID" value="EAL68746.1"/>
    <property type="molecule type" value="Genomic_DNA"/>
</dbReference>
<dbReference type="RefSeq" id="XP_642678.1">
    <property type="nucleotide sequence ID" value="XM_637586.1"/>
</dbReference>
<dbReference type="FunCoup" id="P54643">
    <property type="interactions" value="687"/>
</dbReference>
<dbReference type="STRING" id="44689.P54643"/>
<dbReference type="GlyCosmos" id="P54643">
    <property type="glycosylation" value="1 site, No reported glycans"/>
</dbReference>
<dbReference type="GlyGen" id="P54643">
    <property type="glycosylation" value="4 sites"/>
</dbReference>
<dbReference type="PaxDb" id="44689-DDB0191310"/>
<dbReference type="EnsemblProtists" id="EAL68746">
    <property type="protein sequence ID" value="EAL68746"/>
    <property type="gene ID" value="DDB_G0277379"/>
</dbReference>
<dbReference type="GeneID" id="8620997"/>
<dbReference type="KEGG" id="ddi:DDB_G0277379"/>
<dbReference type="dictyBase" id="DDB_G0277379">
    <property type="gene designation" value="pspD"/>
</dbReference>
<dbReference type="VEuPathDB" id="AmoebaDB:DDB_G0277379"/>
<dbReference type="eggNOG" id="ENOG502RGEP">
    <property type="taxonomic scope" value="Eukaryota"/>
</dbReference>
<dbReference type="HOGENOM" id="CLU_406241_0_0_1"/>
<dbReference type="InParanoid" id="P54643"/>
<dbReference type="OMA" id="GLCVRGE"/>
<dbReference type="PhylomeDB" id="P54643"/>
<dbReference type="PRO" id="PR:P54643"/>
<dbReference type="Proteomes" id="UP000002195">
    <property type="component" value="Chromosome 2"/>
</dbReference>
<dbReference type="GO" id="GO:0031012">
    <property type="term" value="C:extracellular matrix"/>
    <property type="evidence" value="ECO:0007005"/>
    <property type="project" value="dictyBase"/>
</dbReference>
<dbReference type="GO" id="GO:0031160">
    <property type="term" value="C:spore wall"/>
    <property type="evidence" value="ECO:0000314"/>
    <property type="project" value="dictyBase"/>
</dbReference>
<dbReference type="GO" id="GO:0030133">
    <property type="term" value="C:transport vesicle"/>
    <property type="evidence" value="ECO:0007669"/>
    <property type="project" value="UniProtKB-SubCell"/>
</dbReference>
<dbReference type="GO" id="GO:0030435">
    <property type="term" value="P:sporulation resulting in formation of a cellular spore"/>
    <property type="evidence" value="ECO:0000270"/>
    <property type="project" value="dictyBase"/>
</dbReference>
<dbReference type="InterPro" id="IPR007643">
    <property type="entry name" value="Dict_spore_N"/>
</dbReference>
<dbReference type="InterPro" id="IPR003645">
    <property type="entry name" value="Fol_N"/>
</dbReference>
<dbReference type="Pfam" id="PF04562">
    <property type="entry name" value="Dicty_spore_N"/>
    <property type="match status" value="1"/>
</dbReference>
<dbReference type="SMART" id="SM00274">
    <property type="entry name" value="FOLN"/>
    <property type="match status" value="9"/>
</dbReference>
<organism>
    <name type="scientific">Dictyostelium discoideum</name>
    <name type="common">Social amoeba</name>
    <dbReference type="NCBI Taxonomy" id="44689"/>
    <lineage>
        <taxon>Eukaryota</taxon>
        <taxon>Amoebozoa</taxon>
        <taxon>Evosea</taxon>
        <taxon>Eumycetozoa</taxon>
        <taxon>Dictyostelia</taxon>
        <taxon>Dictyosteliales</taxon>
        <taxon>Dictyosteliaceae</taxon>
        <taxon>Dictyostelium</taxon>
    </lineage>
</organism>
<proteinExistence type="evidence at transcript level"/>
<reference key="1">
    <citation type="journal article" date="1994" name="Dev. Biol.">
        <title>Identification of a new spore coat protein gene in the cellular slime mold Dictyostelium discoideum.</title>
        <authorList>
            <person name="Yoder B.K."/>
            <person name="Mao J."/>
            <person name="Erdos G.W."/>
            <person name="West C.M."/>
            <person name="Blumberg D.D."/>
        </authorList>
    </citation>
    <scope>NUCLEOTIDE SEQUENCE [GENOMIC DNA]</scope>
    <source>
        <strain>AX3</strain>
    </source>
</reference>
<reference key="2">
    <citation type="journal article" date="2002" name="Nature">
        <title>Sequence and analysis of chromosome 2 of Dictyostelium discoideum.</title>
        <authorList>
            <person name="Gloeckner G."/>
            <person name="Eichinger L."/>
            <person name="Szafranski K."/>
            <person name="Pachebat J.A."/>
            <person name="Bankier A.T."/>
            <person name="Dear P.H."/>
            <person name="Lehmann R."/>
            <person name="Baumgart C."/>
            <person name="Parra G."/>
            <person name="Abril J.F."/>
            <person name="Guigo R."/>
            <person name="Kumpf K."/>
            <person name="Tunggal B."/>
            <person name="Cox E.C."/>
            <person name="Quail M.A."/>
            <person name="Platzer M."/>
            <person name="Rosenthal A."/>
            <person name="Noegel A.A."/>
        </authorList>
    </citation>
    <scope>NUCLEOTIDE SEQUENCE [LARGE SCALE GENOMIC DNA]</scope>
    <source>
        <strain>AX4</strain>
    </source>
</reference>
<reference key="3">
    <citation type="journal article" date="2005" name="Nature">
        <title>The genome of the social amoeba Dictyostelium discoideum.</title>
        <authorList>
            <person name="Eichinger L."/>
            <person name="Pachebat J.A."/>
            <person name="Gloeckner G."/>
            <person name="Rajandream M.A."/>
            <person name="Sucgang R."/>
            <person name="Berriman M."/>
            <person name="Song J."/>
            <person name="Olsen R."/>
            <person name="Szafranski K."/>
            <person name="Xu Q."/>
            <person name="Tunggal B."/>
            <person name="Kummerfeld S."/>
            <person name="Madera M."/>
            <person name="Konfortov B.A."/>
            <person name="Rivero F."/>
            <person name="Bankier A.T."/>
            <person name="Lehmann R."/>
            <person name="Hamlin N."/>
            <person name="Davies R."/>
            <person name="Gaudet P."/>
            <person name="Fey P."/>
            <person name="Pilcher K."/>
            <person name="Chen G."/>
            <person name="Saunders D."/>
            <person name="Sodergren E.J."/>
            <person name="Davis P."/>
            <person name="Kerhornou A."/>
            <person name="Nie X."/>
            <person name="Hall N."/>
            <person name="Anjard C."/>
            <person name="Hemphill L."/>
            <person name="Bason N."/>
            <person name="Farbrother P."/>
            <person name="Desany B."/>
            <person name="Just E."/>
            <person name="Morio T."/>
            <person name="Rost R."/>
            <person name="Churcher C.M."/>
            <person name="Cooper J."/>
            <person name="Haydock S."/>
            <person name="van Driessche N."/>
            <person name="Cronin A."/>
            <person name="Goodhead I."/>
            <person name="Muzny D.M."/>
            <person name="Mourier T."/>
            <person name="Pain A."/>
            <person name="Lu M."/>
            <person name="Harper D."/>
            <person name="Lindsay R."/>
            <person name="Hauser H."/>
            <person name="James K.D."/>
            <person name="Quiles M."/>
            <person name="Madan Babu M."/>
            <person name="Saito T."/>
            <person name="Buchrieser C."/>
            <person name="Wardroper A."/>
            <person name="Felder M."/>
            <person name="Thangavelu M."/>
            <person name="Johnson D."/>
            <person name="Knights A."/>
            <person name="Loulseged H."/>
            <person name="Mungall K.L."/>
            <person name="Oliver K."/>
            <person name="Price C."/>
            <person name="Quail M.A."/>
            <person name="Urushihara H."/>
            <person name="Hernandez J."/>
            <person name="Rabbinowitsch E."/>
            <person name="Steffen D."/>
            <person name="Sanders M."/>
            <person name="Ma J."/>
            <person name="Kohara Y."/>
            <person name="Sharp S."/>
            <person name="Simmonds M.N."/>
            <person name="Spiegler S."/>
            <person name="Tivey A."/>
            <person name="Sugano S."/>
            <person name="White B."/>
            <person name="Walker D."/>
            <person name="Woodward J.R."/>
            <person name="Winckler T."/>
            <person name="Tanaka Y."/>
            <person name="Shaulsky G."/>
            <person name="Schleicher M."/>
            <person name="Weinstock G.M."/>
            <person name="Rosenthal A."/>
            <person name="Cox E.C."/>
            <person name="Chisholm R.L."/>
            <person name="Gibbs R.A."/>
            <person name="Loomis W.F."/>
            <person name="Platzer M."/>
            <person name="Kay R.R."/>
            <person name="Williams J.G."/>
            <person name="Dear P.H."/>
            <person name="Noegel A.A."/>
            <person name="Barrell B.G."/>
            <person name="Kuspa A."/>
        </authorList>
    </citation>
    <scope>NUCLEOTIDE SEQUENCE [LARGE SCALE GENOMIC DNA]</scope>
    <source>
        <strain>AX4</strain>
    </source>
</reference>
<gene>
    <name type="primary">pspD</name>
    <name type="ORF">DDB_G0277379</name>
</gene>
<sequence>MLFLKNIGVFFMIFLVSKSYATDCNKITNEEECHKSSECIVINYTPCCGEQKWACSKGTFDTCTYENSCYRNSSNNQVVEVSNKCFNLDGFIKITTPTEYSCSDAKIKECALLGKSCSFQKNSCSNPTSCCPGESICEGLSSGSSTSGGGSSGGTSGGSSSGGTSGGSSSGGTSGSSSSGSSSGGVSSCSTTHCPEGYHCSMVNDVATCLASTTGGTGLPGTSSSTAGVSSCLTTLCPIGHICVEDSNGVNCVPNGGGTSGGSSSTGTSGGHPDPCRDVDCPDGFHCECKDGKTAKCVPSPTTGSSSTSGGHPDPCKDVTCPDGFHCECKDGKTAKCVPSPTTGSSSTSGGNTNPCSNVNCPDGFYCECKDGKTAKCVPSGPTQPPKPPVCSLRCPPNHECRFNDQGHQCCVKVHHDRCSLRCPHGHECKVDHNGKECCVRSHRPPPPEVCSLRCPPKHECKFDDHGKKCCVKIHCDEVCDLDCGRGFECKIRHDGSKCCVRSERPHPPQHEKCNKRCPPGHECKVDQHGKECCVVAHRPPPKCSLRCPPRHECRVNHFGEECCVKVHHDKCSLRCPPGHECKVDQHGKECCVVAHRPPPKCSLRCPPKHECRINHFGEECCVKSRNDCLTCEDLNCERKGLHCAMKTVPIDKENCCEKVPVCYSTNPLLDGGHGFI</sequence>
<accession>P54643</accession>
<accession>Q54ZQ8</accession>
<accession>Q75J88</accession>
<feature type="signal peptide" evidence="1">
    <location>
        <begin position="1"/>
        <end position="21"/>
    </location>
</feature>
<feature type="chain" id="PRO_0000032672" description="Spore coat protein SP87">
    <location>
        <begin position="22"/>
        <end position="677"/>
    </location>
</feature>
<feature type="domain" description="DSCP-N">
    <location>
        <begin position="22"/>
        <end position="142"/>
    </location>
</feature>
<feature type="domain" description="Follistatin-like 1">
    <location>
        <begin position="188"/>
        <end position="210"/>
    </location>
</feature>
<feature type="domain" description="Follistatin-like 2">
    <location>
        <begin position="231"/>
        <end position="253"/>
    </location>
</feature>
<feature type="domain" description="Follistatin-like 3">
    <location>
        <begin position="275"/>
        <end position="298"/>
    </location>
</feature>
<feature type="domain" description="Follistatin-like 4">
    <location>
        <begin position="315"/>
        <end position="338"/>
    </location>
</feature>
<feature type="domain" description="Follistatin-like 5">
    <location>
        <begin position="355"/>
        <end position="378"/>
    </location>
</feature>
<feature type="domain" description="Follistatin-like 6">
    <location>
        <begin position="418"/>
        <end position="440"/>
    </location>
</feature>
<feature type="domain" description="Follistatin-like 7">
    <location>
        <begin position="479"/>
        <end position="501"/>
    </location>
</feature>
<feature type="domain" description="Follistatin-like 8">
    <location>
        <begin position="515"/>
        <end position="535"/>
    </location>
</feature>
<feature type="domain" description="Follistatin-like 9">
    <location>
        <begin position="571"/>
        <end position="593"/>
    </location>
</feature>
<feature type="region of interest" description="Disordered" evidence="2">
    <location>
        <begin position="148"/>
        <end position="184"/>
    </location>
</feature>
<feature type="compositionally biased region" description="Gly residues" evidence="2">
    <location>
        <begin position="148"/>
        <end position="174"/>
    </location>
</feature>
<feature type="compositionally biased region" description="Low complexity" evidence="2">
    <location>
        <begin position="175"/>
        <end position="184"/>
    </location>
</feature>
<feature type="glycosylation site" description="N-linked (GlcNAc...) asparagine" evidence="1">
    <location>
        <position position="72"/>
    </location>
</feature>
<protein>
    <recommendedName>
        <fullName>Spore coat protein SP87</fullName>
    </recommendedName>
    <alternativeName>
        <fullName>Protein PL3</fullName>
    </alternativeName>
</protein>
<keyword id="KW-0968">Cytoplasmic vesicle</keyword>
<keyword id="KW-1015">Disulfide bond</keyword>
<keyword id="KW-0325">Glycoprotein</keyword>
<keyword id="KW-1185">Reference proteome</keyword>
<keyword id="KW-0677">Repeat</keyword>
<keyword id="KW-0732">Signal</keyword>
<keyword id="KW-0749">Sporulation</keyword>